<protein>
    <recommendedName>
        <fullName evidence="1">Outer-membrane lipoprotein carrier protein</fullName>
    </recommendedName>
</protein>
<accession>A7ZYJ5</accession>
<evidence type="ECO:0000255" key="1">
    <source>
        <dbReference type="HAMAP-Rule" id="MF_00240"/>
    </source>
</evidence>
<sequence>MKKIAITCALLSSLVASSVWADAASDLKSRLDKVSSFHASFTQKVTDGSGAAVQEGQGDLWVKRPNLFNWHMTQPDESILVSDGKTLWFYNPFVEQATATWLKDATGNTPFMLIARNQSSDWQQYNIKQNGDDFVLTPKASNGNLKQFTINVGRDGTIHQFSAVEQDDQRSSYQLKSQQNGAVDAAKFTFTPPQGVTVDDQRK</sequence>
<feature type="signal peptide" evidence="1">
    <location>
        <begin position="1"/>
        <end position="21"/>
    </location>
</feature>
<feature type="chain" id="PRO_1000058985" description="Outer-membrane lipoprotein carrier protein">
    <location>
        <begin position="22"/>
        <end position="203"/>
    </location>
</feature>
<name>LOLA_ECOHS</name>
<gene>
    <name evidence="1" type="primary">lolA</name>
    <name type="ordered locus">EcHS_A0996</name>
</gene>
<keyword id="KW-0143">Chaperone</keyword>
<keyword id="KW-0574">Periplasm</keyword>
<keyword id="KW-0653">Protein transport</keyword>
<keyword id="KW-0732">Signal</keyword>
<keyword id="KW-0813">Transport</keyword>
<organism>
    <name type="scientific">Escherichia coli O9:H4 (strain HS)</name>
    <dbReference type="NCBI Taxonomy" id="331112"/>
    <lineage>
        <taxon>Bacteria</taxon>
        <taxon>Pseudomonadati</taxon>
        <taxon>Pseudomonadota</taxon>
        <taxon>Gammaproteobacteria</taxon>
        <taxon>Enterobacterales</taxon>
        <taxon>Enterobacteriaceae</taxon>
        <taxon>Escherichia</taxon>
    </lineage>
</organism>
<dbReference type="EMBL" id="CP000802">
    <property type="protein sequence ID" value="ABV05349.1"/>
    <property type="molecule type" value="Genomic_DNA"/>
</dbReference>
<dbReference type="RefSeq" id="WP_001295343.1">
    <property type="nucleotide sequence ID" value="NC_009800.1"/>
</dbReference>
<dbReference type="BMRB" id="A7ZYJ5"/>
<dbReference type="SMR" id="A7ZYJ5"/>
<dbReference type="GeneID" id="93776529"/>
<dbReference type="KEGG" id="ecx:EcHS_A0996"/>
<dbReference type="HOGENOM" id="CLU_087560_1_1_6"/>
<dbReference type="GO" id="GO:0030288">
    <property type="term" value="C:outer membrane-bounded periplasmic space"/>
    <property type="evidence" value="ECO:0007669"/>
    <property type="project" value="TreeGrafter"/>
</dbReference>
<dbReference type="GO" id="GO:0044874">
    <property type="term" value="P:lipoprotein localization to outer membrane"/>
    <property type="evidence" value="ECO:0007669"/>
    <property type="project" value="UniProtKB-UniRule"/>
</dbReference>
<dbReference type="GO" id="GO:0042953">
    <property type="term" value="P:lipoprotein transport"/>
    <property type="evidence" value="ECO:0007669"/>
    <property type="project" value="InterPro"/>
</dbReference>
<dbReference type="CDD" id="cd16325">
    <property type="entry name" value="LolA"/>
    <property type="match status" value="1"/>
</dbReference>
<dbReference type="FunFam" id="2.50.20.10:FF:000001">
    <property type="entry name" value="Outer-membrane lipoprotein carrier protein"/>
    <property type="match status" value="1"/>
</dbReference>
<dbReference type="Gene3D" id="2.50.20.10">
    <property type="entry name" value="Lipoprotein localisation LolA/LolB/LppX"/>
    <property type="match status" value="1"/>
</dbReference>
<dbReference type="HAMAP" id="MF_00240">
    <property type="entry name" value="LolA"/>
    <property type="match status" value="1"/>
</dbReference>
<dbReference type="InterPro" id="IPR029046">
    <property type="entry name" value="LolA/LolB/LppX"/>
</dbReference>
<dbReference type="InterPro" id="IPR004564">
    <property type="entry name" value="OM_lipoprot_carrier_LolA-like"/>
</dbReference>
<dbReference type="InterPro" id="IPR018323">
    <property type="entry name" value="OM_lipoprot_carrier_LolA_Pbac"/>
</dbReference>
<dbReference type="NCBIfam" id="TIGR00547">
    <property type="entry name" value="lolA"/>
    <property type="match status" value="1"/>
</dbReference>
<dbReference type="PANTHER" id="PTHR35869">
    <property type="entry name" value="OUTER-MEMBRANE LIPOPROTEIN CARRIER PROTEIN"/>
    <property type="match status" value="1"/>
</dbReference>
<dbReference type="PANTHER" id="PTHR35869:SF1">
    <property type="entry name" value="OUTER-MEMBRANE LIPOPROTEIN CARRIER PROTEIN"/>
    <property type="match status" value="1"/>
</dbReference>
<dbReference type="Pfam" id="PF03548">
    <property type="entry name" value="LolA"/>
    <property type="match status" value="1"/>
</dbReference>
<dbReference type="SUPFAM" id="SSF89392">
    <property type="entry name" value="Prokaryotic lipoproteins and lipoprotein localization factors"/>
    <property type="match status" value="1"/>
</dbReference>
<reference key="1">
    <citation type="journal article" date="2008" name="J. Bacteriol.">
        <title>The pangenome structure of Escherichia coli: comparative genomic analysis of E. coli commensal and pathogenic isolates.</title>
        <authorList>
            <person name="Rasko D.A."/>
            <person name="Rosovitz M.J."/>
            <person name="Myers G.S.A."/>
            <person name="Mongodin E.F."/>
            <person name="Fricke W.F."/>
            <person name="Gajer P."/>
            <person name="Crabtree J."/>
            <person name="Sebaihia M."/>
            <person name="Thomson N.R."/>
            <person name="Chaudhuri R."/>
            <person name="Henderson I.R."/>
            <person name="Sperandio V."/>
            <person name="Ravel J."/>
        </authorList>
    </citation>
    <scope>NUCLEOTIDE SEQUENCE [LARGE SCALE GENOMIC DNA]</scope>
    <source>
        <strain>HS</strain>
    </source>
</reference>
<proteinExistence type="inferred from homology"/>
<comment type="function">
    <text evidence="1">Participates in the translocation of lipoproteins from the inner membrane to the outer membrane. Only forms a complex with a lipoprotein if the residue after the N-terminal Cys is not an aspartate (The Asp acts as a targeting signal to indicate that the lipoprotein should stay in the inner membrane).</text>
</comment>
<comment type="subunit">
    <text evidence="1">Monomer.</text>
</comment>
<comment type="subcellular location">
    <subcellularLocation>
        <location evidence="1">Periplasm</location>
    </subcellularLocation>
</comment>
<comment type="similarity">
    <text evidence="1">Belongs to the LolA family.</text>
</comment>